<comment type="subcellular location">
    <subcellularLocation>
        <location evidence="2">Membrane</location>
        <topology evidence="2">Single-pass type II membrane protein</topology>
    </subcellularLocation>
</comment>
<comment type="similarity">
    <text evidence="2">Belongs to the glycosyltransferase 31 family. Beta3-Gal-T subfamily.</text>
</comment>
<gene>
    <name evidence="3" type="primary">C1GALT1C1L</name>
</gene>
<sequence>MVSASGTSFFKGMLLGSISWVLITMFGQIHIRHRGQTQDHEHHHLRPPNRNDFLNTSKVILLELSKSIRVFCIIFGESEDESYWAVLKETWTKHCDKAELYDTKNDNLFNIESNDRWVQMRTAYKYVFEKYGDNYNWFFLALPTTFAVIENLKYLLFTRDASQPFYLGHTVIFGDLEYVTVEGGIVLSRELMKRLNRLLDNSETCADQSVIWKLSEDKQLAICLKYAGVHAENAEDYEGRDVFNTKPIAQLIEEALSNNPQQVVEGCCSDMAITFNGLTPQKMEVMMYGLYRLRAFGHYFNDTLVFLPPVGSEND</sequence>
<reference key="1">
    <citation type="journal article" date="2005" name="Nature">
        <title>Generation and annotation of the DNA sequences of human chromosomes 2 and 4.</title>
        <authorList>
            <person name="Hillier L.W."/>
            <person name="Graves T.A."/>
            <person name="Fulton R.S."/>
            <person name="Fulton L.A."/>
            <person name="Pepin K.H."/>
            <person name="Minx P."/>
            <person name="Wagner-McPherson C."/>
            <person name="Layman D."/>
            <person name="Wylie K."/>
            <person name="Sekhon M."/>
            <person name="Becker M.C."/>
            <person name="Fewell G.A."/>
            <person name="Delehaunty K.D."/>
            <person name="Miner T.L."/>
            <person name="Nash W.E."/>
            <person name="Kremitzki C."/>
            <person name="Oddy L."/>
            <person name="Du H."/>
            <person name="Sun H."/>
            <person name="Bradshaw-Cordum H."/>
            <person name="Ali J."/>
            <person name="Carter J."/>
            <person name="Cordes M."/>
            <person name="Harris A."/>
            <person name="Isak A."/>
            <person name="van Brunt A."/>
            <person name="Nguyen C."/>
            <person name="Du F."/>
            <person name="Courtney L."/>
            <person name="Kalicki J."/>
            <person name="Ozersky P."/>
            <person name="Abbott S."/>
            <person name="Armstrong J."/>
            <person name="Belter E.A."/>
            <person name="Caruso L."/>
            <person name="Cedroni M."/>
            <person name="Cotton M."/>
            <person name="Davidson T."/>
            <person name="Desai A."/>
            <person name="Elliott G."/>
            <person name="Erb T."/>
            <person name="Fronick C."/>
            <person name="Gaige T."/>
            <person name="Haakenson W."/>
            <person name="Haglund K."/>
            <person name="Holmes A."/>
            <person name="Harkins R."/>
            <person name="Kim K."/>
            <person name="Kruchowski S.S."/>
            <person name="Strong C.M."/>
            <person name="Grewal N."/>
            <person name="Goyea E."/>
            <person name="Hou S."/>
            <person name="Levy A."/>
            <person name="Martinka S."/>
            <person name="Mead K."/>
            <person name="McLellan M.D."/>
            <person name="Meyer R."/>
            <person name="Randall-Maher J."/>
            <person name="Tomlinson C."/>
            <person name="Dauphin-Kohlberg S."/>
            <person name="Kozlowicz-Reilly A."/>
            <person name="Shah N."/>
            <person name="Swearengen-Shahid S."/>
            <person name="Snider J."/>
            <person name="Strong J.T."/>
            <person name="Thompson J."/>
            <person name="Yoakum M."/>
            <person name="Leonard S."/>
            <person name="Pearman C."/>
            <person name="Trani L."/>
            <person name="Radionenko M."/>
            <person name="Waligorski J.E."/>
            <person name="Wang C."/>
            <person name="Rock S.M."/>
            <person name="Tin-Wollam A.-M."/>
            <person name="Maupin R."/>
            <person name="Latreille P."/>
            <person name="Wendl M.C."/>
            <person name="Yang S.-P."/>
            <person name="Pohl C."/>
            <person name="Wallis J.W."/>
            <person name="Spieth J."/>
            <person name="Bieri T.A."/>
            <person name="Berkowicz N."/>
            <person name="Nelson J.O."/>
            <person name="Osborne J."/>
            <person name="Ding L."/>
            <person name="Meyer R."/>
            <person name="Sabo A."/>
            <person name="Shotland Y."/>
            <person name="Sinha P."/>
            <person name="Wohldmann P.E."/>
            <person name="Cook L.L."/>
            <person name="Hickenbotham M.T."/>
            <person name="Eldred J."/>
            <person name="Williams D."/>
            <person name="Jones T.A."/>
            <person name="She X."/>
            <person name="Ciccarelli F.D."/>
            <person name="Izaurralde E."/>
            <person name="Taylor J."/>
            <person name="Schmutz J."/>
            <person name="Myers R.M."/>
            <person name="Cox D.R."/>
            <person name="Huang X."/>
            <person name="McPherson J.D."/>
            <person name="Mardis E.R."/>
            <person name="Clifton S.W."/>
            <person name="Warren W.C."/>
            <person name="Chinwalla A.T."/>
            <person name="Eddy S.R."/>
            <person name="Marra M.A."/>
            <person name="Ovcharenko I."/>
            <person name="Furey T.S."/>
            <person name="Miller W."/>
            <person name="Eichler E.E."/>
            <person name="Bork P."/>
            <person name="Suyama M."/>
            <person name="Torrents D."/>
            <person name="Waterston R.H."/>
            <person name="Wilson R.K."/>
        </authorList>
    </citation>
    <scope>NUCLEOTIDE SEQUENCE [LARGE SCALE GENOMIC DNA]</scope>
</reference>
<dbReference type="EMBL" id="AC011242">
    <property type="status" value="NOT_ANNOTATED_CDS"/>
    <property type="molecule type" value="Genomic_DNA"/>
</dbReference>
<dbReference type="CCDS" id="CCDS82442.1"/>
<dbReference type="RefSeq" id="NP_001094800.1">
    <property type="nucleotide sequence ID" value="NM_001101330.3"/>
</dbReference>
<dbReference type="SMR" id="P0DN25"/>
<dbReference type="FunCoup" id="P0DN25">
    <property type="interactions" value="58"/>
</dbReference>
<dbReference type="STRING" id="9606.ENSP00000489061"/>
<dbReference type="GlyCosmos" id="P0DN25">
    <property type="glycosylation" value="2 sites, No reported glycans"/>
</dbReference>
<dbReference type="GlyGen" id="P0DN25">
    <property type="glycosylation" value="5 sites, 1 N-linked glycan (1 site), 1 O-linked glycan (3 sites)"/>
</dbReference>
<dbReference type="iPTMnet" id="P0DN25"/>
<dbReference type="PhosphoSitePlus" id="P0DN25"/>
<dbReference type="BioMuta" id="C1GALT1C1L"/>
<dbReference type="MassIVE" id="P0DN25"/>
<dbReference type="PeptideAtlas" id="P0DN25"/>
<dbReference type="DNASU" id="728819"/>
<dbReference type="Ensembl" id="ENST00000475092.4">
    <property type="protein sequence ID" value="ENSP00000489061.1"/>
    <property type="gene ID" value="ENSG00000223658.8"/>
</dbReference>
<dbReference type="GeneID" id="728819"/>
<dbReference type="KEGG" id="hsa:728819"/>
<dbReference type="MANE-Select" id="ENST00000475092.4">
    <property type="protein sequence ID" value="ENSP00000489061.1"/>
    <property type="RefSeq nucleotide sequence ID" value="NM_001101330.3"/>
    <property type="RefSeq protein sequence ID" value="NP_001094800.1"/>
</dbReference>
<dbReference type="AGR" id="HGNC:51617"/>
<dbReference type="CTD" id="728819"/>
<dbReference type="GeneCards" id="C1GALT1C1L"/>
<dbReference type="HGNC" id="HGNC:51617">
    <property type="gene designation" value="C1GALT1C1L"/>
</dbReference>
<dbReference type="HPA" id="ENSG00000223658">
    <property type="expression patterns" value="Low tissue specificity"/>
</dbReference>
<dbReference type="neXtProt" id="NX_P0DN25"/>
<dbReference type="OpenTargets" id="ENSG00000223658"/>
<dbReference type="VEuPathDB" id="HostDB:ENSG00000223658"/>
<dbReference type="GeneTree" id="ENSGT00940000155145"/>
<dbReference type="InParanoid" id="P0DN25"/>
<dbReference type="OMA" id="DNSETCA"/>
<dbReference type="OrthoDB" id="414175at2759"/>
<dbReference type="PAN-GO" id="P0DN25">
    <property type="GO annotations" value="2 GO annotations based on evolutionary models"/>
</dbReference>
<dbReference type="PathwayCommons" id="P0DN25"/>
<dbReference type="SignaLink" id="P0DN25"/>
<dbReference type="BioGRID-ORCS" id="728819">
    <property type="hits" value="9 hits in 220 CRISPR screens"/>
</dbReference>
<dbReference type="GenomeRNAi" id="728819"/>
<dbReference type="Pharos" id="P0DN25">
    <property type="development level" value="Tdark"/>
</dbReference>
<dbReference type="PRO" id="PR:P0DN25"/>
<dbReference type="Proteomes" id="UP000005640">
    <property type="component" value="Chromosome 2"/>
</dbReference>
<dbReference type="RNAct" id="P0DN25">
    <property type="molecule type" value="protein"/>
</dbReference>
<dbReference type="Bgee" id="ENSG00000223658">
    <property type="expression patterns" value="Expressed in male germ line stem cell (sensu Vertebrata) in testis and 112 other cell types or tissues"/>
</dbReference>
<dbReference type="GO" id="GO:0016020">
    <property type="term" value="C:membrane"/>
    <property type="evidence" value="ECO:0007669"/>
    <property type="project" value="UniProtKB-SubCell"/>
</dbReference>
<dbReference type="GO" id="GO:0016263">
    <property type="term" value="F:glycoprotein-N-acetylgalactosamine 3-beta-galactosyltransferase activity"/>
    <property type="evidence" value="ECO:0000318"/>
    <property type="project" value="GO_Central"/>
</dbReference>
<dbReference type="FunFam" id="3.90.550.50:FF:000016">
    <property type="entry name" value="C1GALT1-specific chaperone 1"/>
    <property type="match status" value="1"/>
</dbReference>
<dbReference type="Gene3D" id="3.90.550.50">
    <property type="match status" value="1"/>
</dbReference>
<dbReference type="InterPro" id="IPR026050">
    <property type="entry name" value="C1GALT1/C1GALT1_chp1"/>
</dbReference>
<dbReference type="PANTHER" id="PTHR23033">
    <property type="entry name" value="BETA1,3-GALACTOSYLTRANSFERASE"/>
    <property type="match status" value="1"/>
</dbReference>
<dbReference type="PANTHER" id="PTHR23033:SF38">
    <property type="entry name" value="C1GALT1-SPECIFIC CHAPERONE 1-LIKE PROTEIN"/>
    <property type="match status" value="1"/>
</dbReference>
<name>C1C1L_HUMAN</name>
<keyword id="KW-0325">Glycoprotein</keyword>
<keyword id="KW-0472">Membrane</keyword>
<keyword id="KW-1267">Proteomics identification</keyword>
<keyword id="KW-1185">Reference proteome</keyword>
<keyword id="KW-0735">Signal-anchor</keyword>
<keyword id="KW-0812">Transmembrane</keyword>
<keyword id="KW-1133">Transmembrane helix</keyword>
<organism>
    <name type="scientific">Homo sapiens</name>
    <name type="common">Human</name>
    <dbReference type="NCBI Taxonomy" id="9606"/>
    <lineage>
        <taxon>Eukaryota</taxon>
        <taxon>Metazoa</taxon>
        <taxon>Chordata</taxon>
        <taxon>Craniata</taxon>
        <taxon>Vertebrata</taxon>
        <taxon>Euteleostomi</taxon>
        <taxon>Mammalia</taxon>
        <taxon>Eutheria</taxon>
        <taxon>Euarchontoglires</taxon>
        <taxon>Primates</taxon>
        <taxon>Haplorrhini</taxon>
        <taxon>Catarrhini</taxon>
        <taxon>Hominidae</taxon>
        <taxon>Homo</taxon>
    </lineage>
</organism>
<protein>
    <recommendedName>
        <fullName evidence="3">C1GALT1-specific chaperone 1-like protein</fullName>
    </recommendedName>
</protein>
<accession>P0DN25</accession>
<feature type="chain" id="PRO_0000433923" description="C1GALT1-specific chaperone 1-like protein">
    <location>
        <begin position="1"/>
        <end position="315"/>
    </location>
</feature>
<feature type="topological domain" description="Cytoplasmic" evidence="1">
    <location>
        <begin position="1"/>
        <end position="8"/>
    </location>
</feature>
<feature type="transmembrane region" description="Helical; Signal-anchor for type II membrane protein" evidence="1">
    <location>
        <begin position="9"/>
        <end position="29"/>
    </location>
</feature>
<feature type="topological domain" description="Lumenal" evidence="1">
    <location>
        <begin position="30"/>
        <end position="315"/>
    </location>
</feature>
<feature type="glycosylation site" description="N-linked (GlcNAc...) asparagine" evidence="1">
    <location>
        <position position="55"/>
    </location>
</feature>
<feature type="glycosylation site" description="N-linked (GlcNAc...) asparagine" evidence="1">
    <location>
        <position position="301"/>
    </location>
</feature>
<proteinExistence type="evidence at protein level"/>
<evidence type="ECO:0000255" key="1"/>
<evidence type="ECO:0000305" key="2"/>
<evidence type="ECO:0000312" key="3">
    <source>
        <dbReference type="HGNC" id="HGNC:51617"/>
    </source>
</evidence>